<organism>
    <name type="scientific">Bos taurus</name>
    <name type="common">Bovine</name>
    <dbReference type="NCBI Taxonomy" id="9913"/>
    <lineage>
        <taxon>Eukaryota</taxon>
        <taxon>Metazoa</taxon>
        <taxon>Chordata</taxon>
        <taxon>Craniata</taxon>
        <taxon>Vertebrata</taxon>
        <taxon>Euteleostomi</taxon>
        <taxon>Mammalia</taxon>
        <taxon>Eutheria</taxon>
        <taxon>Laurasiatheria</taxon>
        <taxon>Artiodactyla</taxon>
        <taxon>Ruminantia</taxon>
        <taxon>Pecora</taxon>
        <taxon>Bovidae</taxon>
        <taxon>Bovinae</taxon>
        <taxon>Bos</taxon>
    </lineage>
</organism>
<feature type="signal peptide">
    <location>
        <begin position="1"/>
        <end position="29"/>
    </location>
</feature>
<feature type="propeptide" id="PRO_0000003861" evidence="7">
    <location>
        <begin position="30"/>
        <end position="132"/>
    </location>
</feature>
<feature type="chain" id="PRO_0000003862" description="Desmocollin-1">
    <location>
        <begin position="133"/>
        <end position="893"/>
    </location>
</feature>
<feature type="topological domain" description="Extracellular" evidence="4">
    <location>
        <begin position="133"/>
        <end position="692"/>
    </location>
</feature>
<feature type="transmembrane region" description="Helical" evidence="4">
    <location>
        <begin position="693"/>
        <end position="715"/>
    </location>
</feature>
<feature type="topological domain" description="Cytoplasmic" evidence="4">
    <location>
        <begin position="716"/>
        <end position="893"/>
    </location>
</feature>
<feature type="domain" description="Cadherin 1" evidence="5">
    <location>
        <begin position="133"/>
        <end position="240"/>
    </location>
</feature>
<feature type="domain" description="Cadherin 2" evidence="5">
    <location>
        <begin position="241"/>
        <end position="352"/>
    </location>
</feature>
<feature type="domain" description="Cadherin 3" evidence="5">
    <location>
        <begin position="353"/>
        <end position="470"/>
    </location>
</feature>
<feature type="domain" description="Cadherin 4" evidence="5">
    <location>
        <begin position="471"/>
        <end position="574"/>
    </location>
</feature>
<feature type="domain" description="Cadherin 5" evidence="5">
    <location>
        <begin position="575"/>
        <end position="682"/>
    </location>
</feature>
<feature type="modified residue" description="Phosphothreonine" evidence="3">
    <location>
        <position position="383"/>
    </location>
</feature>
<feature type="glycosylation site" description="N-linked (GlcNAc...) asparagine" evidence="4">
    <location>
        <position position="163"/>
    </location>
</feature>
<feature type="glycosylation site" description="N-linked (GlcNAc...) asparagine" evidence="4">
    <location>
        <position position="398"/>
    </location>
</feature>
<feature type="glycosylation site" description="N-linked (GlcNAc...) asparagine" evidence="4">
    <location>
        <position position="545"/>
    </location>
</feature>
<feature type="splice variant" id="VSP_000649" description="In isoform 1B." evidence="8">
    <original>KVYLCGQDEEH</original>
    <variation>ESIRGHTLVKN</variation>
    <location>
        <begin position="829"/>
        <end position="839"/>
    </location>
</feature>
<feature type="splice variant" id="VSP_000650" description="In isoform 1B." evidence="8">
    <location>
        <begin position="840"/>
        <end position="893"/>
    </location>
</feature>
<feature type="sequence variant">
    <original>I</original>
    <variation>F</variation>
    <location>
        <position position="519"/>
    </location>
</feature>
<feature type="sequence variant">
    <original>Y</original>
    <variation>C</variation>
    <location>
        <position position="788"/>
    </location>
</feature>
<feature type="sequence conflict" description="In Ref. 2; AAA30492 and 3; CAA41088." evidence="9" ref="2 3">
    <original>T</original>
    <variation>A</variation>
    <location>
        <position position="485"/>
    </location>
</feature>
<gene>
    <name type="primary">DSC1</name>
</gene>
<evidence type="ECO:0000250" key="1"/>
<evidence type="ECO:0000250" key="2">
    <source>
        <dbReference type="UniProtKB" id="P55849"/>
    </source>
</evidence>
<evidence type="ECO:0000250" key="3">
    <source>
        <dbReference type="UniProtKB" id="Q08554"/>
    </source>
</evidence>
<evidence type="ECO:0000255" key="4"/>
<evidence type="ECO:0000255" key="5">
    <source>
        <dbReference type="PROSITE-ProRule" id="PRU00043"/>
    </source>
</evidence>
<evidence type="ECO:0000269" key="6">
    <source>
    </source>
</evidence>
<evidence type="ECO:0000269" key="7">
    <source>
    </source>
</evidence>
<evidence type="ECO:0000303" key="8">
    <source>
    </source>
</evidence>
<evidence type="ECO:0000305" key="9"/>
<reference key="1">
    <citation type="journal article" date="1991" name="J. Cell Biol.">
        <title>Cloning and sequence analysis of desmosomal glycoproteins 2 and 3 (desmocollins): cadherin-like desmosomal adhesion molecules with heterogeneous cytoplasmic domains.</title>
        <authorList>
            <person name="Collins J.E."/>
            <person name="Legan P.K."/>
            <person name="Kenny T.P."/>
            <person name="Macgarvie J."/>
            <person name="Holton J.L."/>
            <person name="Garrod D.R."/>
        </authorList>
    </citation>
    <scope>NUCLEOTIDE SEQUENCE [GENOMIC DNA] (ISOFORM 1B)</scope>
    <scope>PARTIAL PROTEIN SEQUENCE</scope>
    <source>
        <tissue>Epidermis</tissue>
    </source>
</reference>
<reference key="2">
    <citation type="journal article" date="1991" name="Proc. Natl. Acad. Sci. U.S.A.">
        <title>Desmocollins form a distinct subset of the cadherin family of cell adhesion molecules.</title>
        <authorList>
            <person name="Mechanic S."/>
            <person name="Raynor K."/>
            <person name="Hill J.E."/>
            <person name="Cowin P."/>
        </authorList>
    </citation>
    <scope>NUCLEOTIDE SEQUENCE [MRNA] (ISOFORM 1B)</scope>
    <scope>PARTIAL PROTEIN SEQUENCE</scope>
</reference>
<reference key="3">
    <citation type="journal article" date="1991" name="Differentiation">
        <title>Amino acid sequence of bovine muzzle epithelial desmocollin derived from cloned cDNA: a novel subtype of desmosomal cadherins.</title>
        <authorList>
            <person name="Koch P.J."/>
            <person name="Goldschmidt M.D."/>
            <person name="Walsh M.J."/>
            <person name="Zimbelmann R."/>
            <person name="Schmelz M."/>
            <person name="Franke W.W."/>
        </authorList>
    </citation>
    <scope>NUCLEOTIDE SEQUENCE [MRNA] OF 133-893 (ISOFORM 1A)</scope>
    <scope>PROTEIN SEQUENCE OF 296-308; 340-351; 493-507 AND 610-618</scope>
    <source>
        <tissue>Muzzle epithelium</tissue>
    </source>
</reference>
<reference key="4">
    <citation type="journal article" date="1990" name="J. Cell Sci.">
        <title>Desmosomal glycoproteins 2 and 3 (desmocollins) show N-terminal similarity to calcium-dependent cell-cell adhesion molecules.</title>
        <authorList>
            <person name="Holton J.L."/>
            <person name="Kenny T.P."/>
            <person name="Legan P.K."/>
            <person name="Collins J.E."/>
            <person name="Keen J.N."/>
            <person name="Sharma R."/>
            <person name="Garrod D.R."/>
        </authorList>
    </citation>
    <scope>PROTEIN SEQUENCE OF 133-155</scope>
</reference>
<reference key="5">
    <citation type="journal article" date="1990" name="J. Cell Sci.">
        <title>Size heterogeneity, phosphorylation and transmembrane organisation of desmosomal glycoproteins 2 and 3 (desmocollins) in MDCK cells.</title>
        <authorList>
            <person name="Parrish E.P."/>
            <person name="Marston J.E."/>
            <person name="Mattey D.L."/>
            <person name="Measures H.R."/>
            <person name="Venning R."/>
            <person name="Garrod D.R."/>
        </authorList>
    </citation>
    <scope>PHOSPHORYLATION</scope>
</reference>
<name>DSC1_BOVIN</name>
<comment type="function">
    <text evidence="2">A component of desmosome cell-cell junctions which are required for positive regulation of cellular adhesion (By similarity). Required for desmosome adhesion strength between the granular layers of the epidermis, as a result moderates epidermal proliferation and differentiation (By similarity). Is therefore required to maintain postnatal epidermal barrier function and normal hair follicle morphology into adulthood (By similarity).</text>
</comment>
<comment type="subunit">
    <text evidence="3">Binds to JUP/plakoglobin.</text>
</comment>
<comment type="subcellular location">
    <subcellularLocation>
        <location evidence="3">Cell membrane</location>
        <topology evidence="4">Single-pass type I membrane protein</topology>
    </subcellularLocation>
    <subcellularLocation>
        <location evidence="2">Cell junction</location>
        <location evidence="2">Desmosome</location>
    </subcellularLocation>
</comment>
<comment type="alternative products">
    <event type="alternative splicing"/>
    <isoform>
        <id>Q01107-1</id>
        <name>1A</name>
        <name>DG2</name>
        <sequence type="displayed"/>
    </isoform>
    <isoform>
        <id>Q01107-2</id>
        <name>1B</name>
        <name>DG3</name>
        <sequence type="described" ref="VSP_000649 VSP_000650"/>
    </isoform>
</comment>
<comment type="tissue specificity">
    <text>Epidermis and weakly in tongue papillae.</text>
</comment>
<comment type="domain">
    <text evidence="9">Calcium may be bound by the cadherin-like repeats.</text>
</comment>
<comment type="domain">
    <text evidence="1">Three calcium ions are usually bound at the interface of each cadherin domain and rigidify the connections, imparting a strong curvature to the full-length ectodomain.</text>
</comment>
<comment type="PTM">
    <text evidence="6">Isoform 1A is phosphorylated on a serine but isoform 1B is not.</text>
</comment>
<accession>Q01107</accession>
<accession>Q28095</accession>
<sequence length="893" mass="99648">MAVASAAPGSIFWKQLLFSLLVLILFCDACQKISLQVPSHLRAEALVGKVNLKECLQSASLILSSDPDFRILEDGSIYTTHDLVLSSGKSFSILLSDSQGQGQKEIEIILEAGGKKVPKRHMKDAVLRRTKRRWAPIPCSLMENSLGPFPQHVQQVQSDAAQNYTIFYSISGPGVDKEPFNLFFIEKDTGDIFCTRSIDREQYQEFPIYAYATTADGYAPEYPLPLVFKVEDDNDNAPYFENKLTVFTVPENCRTGTSVGKVTAIDLDEPDTLHTRLKYKILQQIPNNPRHFTVHPDTGVITTTTPLLDREKCDTYKLIMEVRDMGGQPFGLFNTGTITISLEDENDNAPYFTETSYTVEVEENRIDVEILRMAVHDHDLPNTPHSRAVYQILQGNENGTFKISTDPNTNEAVLCVVKPLNYEVNRQVVLQIGVLNEAQFAKAVNSKTTTTMCTTVVTVKVKDHDEGPECQPPVKVIQSEDCLPTGTELLGYKAVDPERGTGEGLRYKKIQDEDNWFEINEYTGDLKTVKVLDRESTFVKNNQYNVSVIAFDADGRSCTGTLVVFLEDKNDHPPQIKQEELTICRHDKDYVVLEPTDQDGPDNGPPFQFILDNSASKLWTVETRDGKTAILRGRQDLDYDYYTVPIQIKDRHGASATHILPVRVCDCTIPSECRMPSKLSREAALANVFLGKWAILAMVLGSVLLLCILFTCFCVTVKKTVKKCFPEDVAQQNLIVSNTEGPGEEVMDANIRLPTQTSNVCDTSISVGTLGGQGVKTQQSFEMVKGGYTLDANKGGGHQTLESVKGVTDTGRYTYSDWHNFTQPRLGEKVYLCGQDEEHKLCEDYVRSYSYEGKGSVAGSVGCCSDRQEEEGLDFLDHLEPKFRTLAKTCVKK</sequence>
<keyword id="KW-0025">Alternative splicing</keyword>
<keyword id="KW-0106">Calcium</keyword>
<keyword id="KW-0130">Cell adhesion</keyword>
<keyword id="KW-0965">Cell junction</keyword>
<keyword id="KW-1003">Cell membrane</keyword>
<keyword id="KW-0165">Cleavage on pair of basic residues</keyword>
<keyword id="KW-0903">Direct protein sequencing</keyword>
<keyword id="KW-0325">Glycoprotein</keyword>
<keyword id="KW-0472">Membrane</keyword>
<keyword id="KW-0479">Metal-binding</keyword>
<keyword id="KW-0597">Phosphoprotein</keyword>
<keyword id="KW-1185">Reference proteome</keyword>
<keyword id="KW-0677">Repeat</keyword>
<keyword id="KW-0732">Signal</keyword>
<keyword id="KW-0812">Transmembrane</keyword>
<keyword id="KW-1133">Transmembrane helix</keyword>
<dbReference type="EMBL" id="X56966">
    <property type="protein sequence ID" value="CAA40286.1"/>
    <property type="molecule type" value="mRNA"/>
</dbReference>
<dbReference type="EMBL" id="X56967">
    <property type="protein sequence ID" value="CAA40287.1"/>
    <property type="molecule type" value="mRNA"/>
</dbReference>
<dbReference type="EMBL" id="X56968">
    <property type="protein sequence ID" value="CAA40289.1"/>
    <property type="molecule type" value="Genomic_DNA"/>
</dbReference>
<dbReference type="EMBL" id="X56968">
    <property type="protein sequence ID" value="CAA40288.1"/>
    <property type="molecule type" value="Genomic_DNA"/>
</dbReference>
<dbReference type="EMBL" id="M67489">
    <property type="protein sequence ID" value="AAA30492.1"/>
    <property type="molecule type" value="mRNA"/>
</dbReference>
<dbReference type="EMBL" id="X58029">
    <property type="protein sequence ID" value="CAA41088.1"/>
    <property type="molecule type" value="mRNA"/>
</dbReference>
<dbReference type="PIR" id="A43838">
    <property type="entry name" value="IJBODE"/>
</dbReference>
<dbReference type="PIR" id="B38456">
    <property type="entry name" value="IJBODF"/>
</dbReference>
<dbReference type="RefSeq" id="NP_776469.1">
    <molecule id="Q01107-2"/>
    <property type="nucleotide sequence ID" value="NM_174044.1"/>
</dbReference>
<dbReference type="SMR" id="Q01107"/>
<dbReference type="FunCoup" id="Q01107">
    <property type="interactions" value="66"/>
</dbReference>
<dbReference type="STRING" id="9913.ENSBTAP00000026482"/>
<dbReference type="GlyCosmos" id="Q01107">
    <property type="glycosylation" value="3 sites, No reported glycans"/>
</dbReference>
<dbReference type="GlyGen" id="Q01107">
    <property type="glycosylation" value="3 sites"/>
</dbReference>
<dbReference type="PaxDb" id="9913-ENSBTAP00000026482"/>
<dbReference type="PeptideAtlas" id="Q01107"/>
<dbReference type="GeneID" id="281127"/>
<dbReference type="KEGG" id="bta:281127"/>
<dbReference type="CTD" id="1823"/>
<dbReference type="eggNOG" id="KOG3594">
    <property type="taxonomic scope" value="Eukaryota"/>
</dbReference>
<dbReference type="InParanoid" id="Q01107"/>
<dbReference type="OrthoDB" id="6079678at2759"/>
<dbReference type="Proteomes" id="UP000009136">
    <property type="component" value="Unplaced"/>
</dbReference>
<dbReference type="GO" id="GO:0005912">
    <property type="term" value="C:adherens junction"/>
    <property type="evidence" value="ECO:0000318"/>
    <property type="project" value="GO_Central"/>
</dbReference>
<dbReference type="GO" id="GO:0045177">
    <property type="term" value="C:apical part of cell"/>
    <property type="evidence" value="ECO:0000318"/>
    <property type="project" value="GO_Central"/>
</dbReference>
<dbReference type="GO" id="GO:0016342">
    <property type="term" value="C:catenin complex"/>
    <property type="evidence" value="ECO:0000318"/>
    <property type="project" value="GO_Central"/>
</dbReference>
<dbReference type="GO" id="GO:0005737">
    <property type="term" value="C:cytoplasm"/>
    <property type="evidence" value="ECO:0000318"/>
    <property type="project" value="GO_Central"/>
</dbReference>
<dbReference type="GO" id="GO:0030057">
    <property type="term" value="C:desmosome"/>
    <property type="evidence" value="ECO:0007669"/>
    <property type="project" value="UniProtKB-SubCell"/>
</dbReference>
<dbReference type="GO" id="GO:0014704">
    <property type="term" value="C:intercalated disc"/>
    <property type="evidence" value="ECO:0000318"/>
    <property type="project" value="GO_Central"/>
</dbReference>
<dbReference type="GO" id="GO:0030027">
    <property type="term" value="C:lamellipodium"/>
    <property type="evidence" value="ECO:0000318"/>
    <property type="project" value="GO_Central"/>
</dbReference>
<dbReference type="GO" id="GO:0016020">
    <property type="term" value="C:membrane"/>
    <property type="evidence" value="ECO:0000304"/>
    <property type="project" value="AgBase"/>
</dbReference>
<dbReference type="GO" id="GO:0043005">
    <property type="term" value="C:neuron projection"/>
    <property type="evidence" value="ECO:0000318"/>
    <property type="project" value="GO_Central"/>
</dbReference>
<dbReference type="GO" id="GO:0008013">
    <property type="term" value="F:beta-catenin binding"/>
    <property type="evidence" value="ECO:0000318"/>
    <property type="project" value="GO_Central"/>
</dbReference>
<dbReference type="GO" id="GO:0045296">
    <property type="term" value="F:cadherin binding"/>
    <property type="evidence" value="ECO:0000318"/>
    <property type="project" value="GO_Central"/>
</dbReference>
<dbReference type="GO" id="GO:0005509">
    <property type="term" value="F:calcium ion binding"/>
    <property type="evidence" value="ECO:0000304"/>
    <property type="project" value="AgBase"/>
</dbReference>
<dbReference type="GO" id="GO:0034332">
    <property type="term" value="P:adherens junction organization"/>
    <property type="evidence" value="ECO:0000318"/>
    <property type="project" value="GO_Central"/>
</dbReference>
<dbReference type="GO" id="GO:0016339">
    <property type="term" value="P:calcium-dependent cell-cell adhesion via plasma membrane cell adhesion molecules"/>
    <property type="evidence" value="ECO:0000318"/>
    <property type="project" value="GO_Central"/>
</dbReference>
<dbReference type="GO" id="GO:0016477">
    <property type="term" value="P:cell migration"/>
    <property type="evidence" value="ECO:0000318"/>
    <property type="project" value="GO_Central"/>
</dbReference>
<dbReference type="GO" id="GO:0000902">
    <property type="term" value="P:cell morphogenesis"/>
    <property type="evidence" value="ECO:0000318"/>
    <property type="project" value="GO_Central"/>
</dbReference>
<dbReference type="GO" id="GO:0044331">
    <property type="term" value="P:cell-cell adhesion mediated by cadherin"/>
    <property type="evidence" value="ECO:0000318"/>
    <property type="project" value="GO_Central"/>
</dbReference>
<dbReference type="GO" id="GO:0007043">
    <property type="term" value="P:cell-cell junction assembly"/>
    <property type="evidence" value="ECO:0000318"/>
    <property type="project" value="GO_Central"/>
</dbReference>
<dbReference type="GO" id="GO:0002160">
    <property type="term" value="P:desmosome maintenance"/>
    <property type="evidence" value="ECO:0000250"/>
    <property type="project" value="UniProtKB"/>
</dbReference>
<dbReference type="GO" id="GO:0061436">
    <property type="term" value="P:establishment of skin barrier"/>
    <property type="evidence" value="ECO:0000250"/>
    <property type="project" value="UniProtKB"/>
</dbReference>
<dbReference type="GO" id="GO:0031069">
    <property type="term" value="P:hair follicle morphogenesis"/>
    <property type="evidence" value="ECO:0000250"/>
    <property type="project" value="UniProtKB"/>
</dbReference>
<dbReference type="GO" id="GO:0007156">
    <property type="term" value="P:homophilic cell adhesion via plasma membrane adhesion molecules"/>
    <property type="evidence" value="ECO:0007669"/>
    <property type="project" value="InterPro"/>
</dbReference>
<dbReference type="GO" id="GO:0050680">
    <property type="term" value="P:negative regulation of epithelial cell proliferation"/>
    <property type="evidence" value="ECO:0000250"/>
    <property type="project" value="UniProtKB"/>
</dbReference>
<dbReference type="GO" id="GO:0007416">
    <property type="term" value="P:synapse assembly"/>
    <property type="evidence" value="ECO:0000318"/>
    <property type="project" value="GO_Central"/>
</dbReference>
<dbReference type="CDD" id="cd11304">
    <property type="entry name" value="Cadherin_repeat"/>
    <property type="match status" value="4"/>
</dbReference>
<dbReference type="FunFam" id="2.60.40.60:FF:000011">
    <property type="entry name" value="Cadherin 1"/>
    <property type="match status" value="1"/>
</dbReference>
<dbReference type="FunFam" id="2.60.40.60:FF:000019">
    <property type="entry name" value="Cadherin 2"/>
    <property type="match status" value="1"/>
</dbReference>
<dbReference type="FunFam" id="2.60.40.60:FF:000027">
    <property type="entry name" value="Cadherin 2"/>
    <property type="match status" value="1"/>
</dbReference>
<dbReference type="FunFam" id="2.60.40.60:FF:000031">
    <property type="entry name" value="Cadherin 3"/>
    <property type="match status" value="1"/>
</dbReference>
<dbReference type="FunFam" id="2.60.40.60:FF:000091">
    <property type="entry name" value="Desmocollin 1"/>
    <property type="match status" value="1"/>
</dbReference>
<dbReference type="FunFam" id="2.60.40.60:FF:000096">
    <property type="entry name" value="Desmocollin 2"/>
    <property type="match status" value="1"/>
</dbReference>
<dbReference type="FunFam" id="4.10.900.10:FF:000005">
    <property type="entry name" value="Desmocollin 2"/>
    <property type="match status" value="1"/>
</dbReference>
<dbReference type="Gene3D" id="2.60.40.60">
    <property type="entry name" value="Cadherins"/>
    <property type="match status" value="6"/>
</dbReference>
<dbReference type="Gene3D" id="4.10.900.10">
    <property type="entry name" value="TCF3-CBD (Catenin binding domain)"/>
    <property type="match status" value="1"/>
</dbReference>
<dbReference type="InterPro" id="IPR050971">
    <property type="entry name" value="Cadherin-domain_protein"/>
</dbReference>
<dbReference type="InterPro" id="IPR002126">
    <property type="entry name" value="Cadherin-like_dom"/>
</dbReference>
<dbReference type="InterPro" id="IPR015919">
    <property type="entry name" value="Cadherin-like_sf"/>
</dbReference>
<dbReference type="InterPro" id="IPR020894">
    <property type="entry name" value="Cadherin_CS"/>
</dbReference>
<dbReference type="InterPro" id="IPR014868">
    <property type="entry name" value="Cadherin_pro_dom"/>
</dbReference>
<dbReference type="InterPro" id="IPR000233">
    <property type="entry name" value="Cadherin_Y-type_LIR"/>
</dbReference>
<dbReference type="InterPro" id="IPR027397">
    <property type="entry name" value="Catenin-bd_sf"/>
</dbReference>
<dbReference type="InterPro" id="IPR009122">
    <property type="entry name" value="Desmosomal_cadherin"/>
</dbReference>
<dbReference type="PANTHER" id="PTHR24025:SF8">
    <property type="entry name" value="DESMOCOLLIN-1"/>
    <property type="match status" value="1"/>
</dbReference>
<dbReference type="PANTHER" id="PTHR24025">
    <property type="entry name" value="DESMOGLEIN FAMILY MEMBER"/>
    <property type="match status" value="1"/>
</dbReference>
<dbReference type="Pfam" id="PF01049">
    <property type="entry name" value="CADH_Y-type_LIR"/>
    <property type="match status" value="1"/>
</dbReference>
<dbReference type="Pfam" id="PF00028">
    <property type="entry name" value="Cadherin"/>
    <property type="match status" value="4"/>
</dbReference>
<dbReference type="Pfam" id="PF08758">
    <property type="entry name" value="Cadherin_pro"/>
    <property type="match status" value="1"/>
</dbReference>
<dbReference type="PRINTS" id="PR00205">
    <property type="entry name" value="CADHERIN"/>
</dbReference>
<dbReference type="PRINTS" id="PR01818">
    <property type="entry name" value="DESMOCADHERN"/>
</dbReference>
<dbReference type="PRINTS" id="PR01820">
    <property type="entry name" value="DESMOCOLLIN"/>
</dbReference>
<dbReference type="SMART" id="SM00112">
    <property type="entry name" value="CA"/>
    <property type="match status" value="5"/>
</dbReference>
<dbReference type="SMART" id="SM01055">
    <property type="entry name" value="Cadherin_pro"/>
    <property type="match status" value="1"/>
</dbReference>
<dbReference type="SUPFAM" id="SSF49313">
    <property type="entry name" value="Cadherin-like"/>
    <property type="match status" value="6"/>
</dbReference>
<dbReference type="PROSITE" id="PS00232">
    <property type="entry name" value="CADHERIN_1"/>
    <property type="match status" value="2"/>
</dbReference>
<dbReference type="PROSITE" id="PS50268">
    <property type="entry name" value="CADHERIN_2"/>
    <property type="match status" value="5"/>
</dbReference>
<proteinExistence type="evidence at protein level"/>
<protein>
    <recommendedName>
        <fullName>Desmocollin-1</fullName>
    </recommendedName>
    <alternativeName>
        <fullName>Desmosomal glycoprotein 2/3</fullName>
        <shortName>DG2/DG3</shortName>
    </alternativeName>
</protein>